<name>F13A_HUMAN</name>
<comment type="function">
    <text evidence="12">Factor XIII is activated by thrombin and calcium ion to a transglutaminase that catalyzes the formation of gamma-glutamyl-epsilon-lysine cross-links between fibrin chains, thus stabilizing the fibrin clot. Also cross-link alpha-2-plasmin inhibitor, or fibronectin, to the alpha chains of fibrin.</text>
</comment>
<comment type="catalytic activity">
    <reaction evidence="1 12">
        <text>L-glutaminyl-[protein] + L-lysyl-[protein] = [protein]-L-lysyl-N(6)-5-L-glutamyl-[protein] + NH4(+)</text>
        <dbReference type="Rhea" id="RHEA:54816"/>
        <dbReference type="Rhea" id="RHEA-COMP:9752"/>
        <dbReference type="Rhea" id="RHEA-COMP:10207"/>
        <dbReference type="Rhea" id="RHEA-COMP:14005"/>
        <dbReference type="ChEBI" id="CHEBI:28938"/>
        <dbReference type="ChEBI" id="CHEBI:29969"/>
        <dbReference type="ChEBI" id="CHEBI:30011"/>
        <dbReference type="ChEBI" id="CHEBI:138370"/>
        <dbReference type="EC" id="2.3.2.13"/>
    </reaction>
</comment>
<comment type="cofactor">
    <cofactor evidence="20">
        <name>Ca(2+)</name>
        <dbReference type="ChEBI" id="CHEBI:29108"/>
    </cofactor>
    <text evidence="20">Binds 1 Ca(2+) ion per subunit.</text>
</comment>
<comment type="subunit">
    <text evidence="11 16">Tetramer of two A chains (F13A1) and two B (F13B) chains.</text>
</comment>
<comment type="interaction">
    <interactant intactId="EBI-2565863">
        <id>P00488</id>
    </interactant>
    <interactant intactId="EBI-12015080">
        <id>Q8WXK3-2</id>
        <label>ASB13</label>
    </interactant>
    <organismsDiffer>false</organismsDiffer>
    <experiments>3</experiments>
</comment>
<comment type="interaction">
    <interactant intactId="EBI-2565863">
        <id>P00488</id>
    </interactant>
    <interactant intactId="EBI-1773949">
        <id>Q9BXL8</id>
        <label>CDCA4</label>
    </interactant>
    <organismsDiffer>false</organismsDiffer>
    <experiments>3</experiments>
</comment>
<comment type="interaction">
    <interactant intactId="EBI-2565863">
        <id>P00488</id>
    </interactant>
    <interactant intactId="EBI-7247651">
        <id>Q96MX0</id>
        <label>CMTM3</label>
    </interactant>
    <organismsDiffer>false</organismsDiffer>
    <experiments>3</experiments>
</comment>
<comment type="interaction">
    <interactant intactId="EBI-2565863">
        <id>P00488</id>
    </interactant>
    <interactant intactId="EBI-3924130">
        <id>Q99944</id>
        <label>EGFL8</label>
    </interactant>
    <organismsDiffer>false</organismsDiffer>
    <experiments>3</experiments>
</comment>
<comment type="interaction">
    <interactant intactId="EBI-2565863">
        <id>P00488</id>
    </interactant>
    <interactant intactId="EBI-10213520">
        <id>Q6NXG1</id>
        <label>ESRP1</label>
    </interactant>
    <organismsDiffer>false</organismsDiffer>
    <experiments>3</experiments>
</comment>
<comment type="interaction">
    <interactant intactId="EBI-2565863">
        <id>P00488</id>
    </interactant>
    <interactant intactId="EBI-21567429">
        <id>Q6NXG1-3</id>
        <label>ESRP1</label>
    </interactant>
    <organismsDiffer>false</organismsDiffer>
    <experiments>3</experiments>
</comment>
<comment type="interaction">
    <interactant intactId="EBI-2565863">
        <id>P00488</id>
    </interactant>
    <interactant intactId="EBI-11793142">
        <id>Q96GL9</id>
        <label>FAM163A</label>
    </interactant>
    <organismsDiffer>false</organismsDiffer>
    <experiments>3</experiments>
</comment>
<comment type="interaction">
    <interactant intactId="EBI-2565863">
        <id>P00488</id>
    </interactant>
    <interactant intactId="EBI-17178971">
        <id>Q14005-2</id>
        <label>IL16</label>
    </interactant>
    <organismsDiffer>false</organismsDiffer>
    <experiments>3</experiments>
</comment>
<comment type="interaction">
    <interactant intactId="EBI-2565863">
        <id>P00488</id>
    </interactant>
    <interactant intactId="EBI-714379">
        <id>Q9Y2M5</id>
        <label>KLHL20</label>
    </interactant>
    <organismsDiffer>false</organismsDiffer>
    <experiments>3</experiments>
</comment>
<comment type="interaction">
    <interactant intactId="EBI-2565863">
        <id>P00488</id>
    </interactant>
    <interactant intactId="EBI-9088829">
        <id>Q6DKI2</id>
        <label>LGALS9C</label>
    </interactant>
    <organismsDiffer>false</organismsDiffer>
    <experiments>3</experiments>
</comment>
<comment type="interaction">
    <interactant intactId="EBI-2565863">
        <id>P00488</id>
    </interactant>
    <interactant intactId="EBI-9091052">
        <id>Q6P4D5-2</id>
        <label>PABIR3</label>
    </interactant>
    <organismsDiffer>false</organismsDiffer>
    <experiments>3</experiments>
</comment>
<comment type="interaction">
    <interactant intactId="EBI-2565863">
        <id>P00488</id>
    </interactant>
    <interactant intactId="EBI-395189">
        <id>P19388</id>
        <label>POLR2E</label>
    </interactant>
    <organismsDiffer>false</organismsDiffer>
    <experiments>3</experiments>
</comment>
<comment type="interaction">
    <interactant intactId="EBI-2565863">
        <id>P00488</id>
    </interactant>
    <interactant intactId="EBI-25835994">
        <id>Q6ZMI0-5</id>
        <label>PPP1R21</label>
    </interactant>
    <organismsDiffer>false</organismsDiffer>
    <experiments>3</experiments>
</comment>
<comment type="interaction">
    <interactant intactId="EBI-2565863">
        <id>P00488</id>
    </interactant>
    <interactant intactId="EBI-25839575">
        <id>Q8WZ73-3</id>
        <label>RFFL</label>
    </interactant>
    <organismsDiffer>false</organismsDiffer>
    <experiments>3</experiments>
</comment>
<comment type="interaction">
    <interactant intactId="EBI-2565863">
        <id>P00488</id>
    </interactant>
    <interactant intactId="EBI-10182463">
        <id>Q2NKQ1-4</id>
        <label>SGSM1</label>
    </interactant>
    <organismsDiffer>false</organismsDiffer>
    <experiments>3</experiments>
</comment>
<comment type="interaction">
    <interactant intactId="EBI-2565863">
        <id>P00488</id>
    </interactant>
    <interactant intactId="EBI-954089">
        <id>O15273</id>
        <label>TCAP</label>
    </interactant>
    <organismsDiffer>false</organismsDiffer>
    <experiments>3</experiments>
</comment>
<comment type="interaction">
    <interactant intactId="EBI-2565863">
        <id>P00488</id>
    </interactant>
    <interactant intactId="EBI-2372529">
        <id>O60830</id>
        <label>TIMM17B</label>
    </interactant>
    <organismsDiffer>false</organismsDiffer>
    <experiments>3</experiments>
</comment>
<comment type="interaction">
    <interactant intactId="EBI-2565863">
        <id>P00488</id>
    </interactant>
    <interactant intactId="EBI-9089156">
        <id>Q8IUR5-4</id>
        <label>TMTC1</label>
    </interactant>
    <organismsDiffer>false</organismsDiffer>
    <experiments>3</experiments>
</comment>
<comment type="interaction">
    <interactant intactId="EBI-2565863">
        <id>P00488</id>
    </interactant>
    <interactant intactId="EBI-3914288">
        <id>O60636</id>
        <label>TSPAN2</label>
    </interactant>
    <organismsDiffer>false</organismsDiffer>
    <experiments>3</experiments>
</comment>
<comment type="interaction">
    <interactant intactId="EBI-2565863">
        <id>P00488</id>
    </interactant>
    <interactant intactId="EBI-12040603">
        <id>Q9NZC7-5</id>
        <label>WWOX</label>
    </interactant>
    <organismsDiffer>false</organismsDiffer>
    <experiments>3</experiments>
</comment>
<comment type="interaction">
    <interactant intactId="EBI-2565863">
        <id>P00488</id>
    </interactant>
    <interactant intactId="EBI-25830993">
        <id>Q96EF9</id>
        <label>ZHX1-C8orf76</label>
    </interactant>
    <organismsDiffer>false</organismsDiffer>
    <experiments>3</experiments>
</comment>
<comment type="interaction">
    <interactant intactId="EBI-2565863">
        <id>P00488</id>
    </interactant>
    <interactant intactId="EBI-9088990">
        <id>Q7Z783</id>
    </interactant>
    <organismsDiffer>false</organismsDiffer>
    <experiments>3</experiments>
</comment>
<comment type="subcellular location">
    <subcellularLocation>
        <location>Cytoplasm</location>
    </subcellularLocation>
    <subcellularLocation>
        <location evidence="16">Secreted</location>
    </subcellularLocation>
    <text>Secreted into the blood plasma. Cytoplasmic in most tissues, but also secreted in the blood plasma.</text>
</comment>
<comment type="PTM">
    <text>The activation peptide is released by thrombin.</text>
</comment>
<comment type="polymorphism">
    <text evidence="18">There are four main allelic forms of this protein; F13A*1A, F13A*1B, F13A*2A and F13A*2B. In addition two other intermediate forms (F13A*(2)A and F13A*(2)B) seem to exist. The sequence shown is that of F13A*1B.</text>
</comment>
<comment type="disease" evidence="4 7 8 9 10 12">
    <disease id="DI-01543">
        <name>Factor XIII subunit A deficiency</name>
        <acronym>FA13AD</acronym>
        <description>An autosomal recessive hematologic disorder characterized by a life-long bleeding tendency, impaired wound healing and spontaneous abortion in affected women.</description>
        <dbReference type="MIM" id="613225"/>
    </disease>
    <text>The disease is caused by variants affecting the gene represented in this entry.</text>
</comment>
<comment type="similarity">
    <text evidence="21">Belongs to the transglutaminase superfamily. Transglutaminase family.</text>
</comment>
<comment type="sequence caution" evidence="21">
    <conflict type="erroneous initiation">
        <sequence resource="EMBL-CDS" id="AAA52489"/>
    </conflict>
</comment>
<comment type="sequence caution" evidence="21">
    <conflict type="erroneous initiation">
        <sequence resource="EMBL-CDS" id="BAD92089"/>
    </conflict>
</comment>
<comment type="online information" name="Wikipedia">
    <link uri="https://en.wikipedia.org/wiki/Factor_XIII"/>
    <text>Factor XIII entry</text>
</comment>
<sequence length="732" mass="83268">MSETSRTAFGGRRAVPPNNSNAAEDDLPTVELQGVVPRGVNLQEFLNVTSVHLFKERWDTNKVDHHTDKYENNKLIVRRGQSFYVQIDFSRPYDPRRDLFRVEYVIGRYPQENKGTYIPVPIVSELQSGKWGAKIVMREDRSVRLSIQSSPKCIVGKFRMYVAVWTPYGVLRTSRNPETDTYILFNPWCEDDAVYLDNEKEREEYVLNDIGVIFYGEVNDIKTRSWSYGQFEDGILDTCLYVMDRAQMDLSGRGNPIKVSRVGSAMVNAKDDEGVLVGSWDNIYAYGVPPSAWTGSVDILLEYRSSENPVRYGQCWVFAGVFNTFLRCLGIPARIVTNYFSAHDNDANLQMDIFLEEDGNVNSKLTKDSVWNYHCWNEAWMTRPDLPVGFGGWQAVDSTPQENSDGMYRCGPASVQAIKHGHVCFQFDAPFVFAEVNSDLIYITAKKDGTHVVENVDATHIGKLIVTKQIGGDGMMDITDTYKFQEGQEEERLALETALMYGAKKPLNTEGVMKSRSNVDMDFEVENAVLGKDFKLSITFRNNSHNRYTITAYLSANITFYTGVPKAEFKKETFDVTLEPLSFKKEAVLIQAGEYMGQLLEQASLHFFVTARINETRDVLAKQKSTVLTIPEIIIKVRGTQVVGSDMTVTVEFTNPLKETLRNVWVHLDGPGVTRPMKKMFREIRPNSTVQWEEVCRPWVSGHRKLIASMSSDSLRHVYGELDVQIQRRPSM</sequence>
<proteinExistence type="evidence at protein level"/>
<protein>
    <recommendedName>
        <fullName>Coagulation factor XIII A chain</fullName>
        <shortName>Coagulation factor XIIIa</shortName>
        <ecNumber evidence="12">2.3.2.13</ecNumber>
    </recommendedName>
    <alternativeName>
        <fullName>Protein-glutamine gamma-glutamyltransferase A chain</fullName>
    </alternativeName>
    <alternativeName>
        <fullName>Transglutaminase A chain</fullName>
    </alternativeName>
</protein>
<evidence type="ECO:0000255" key="1">
    <source>
        <dbReference type="PROSITE-ProRule" id="PRU10024"/>
    </source>
</evidence>
<evidence type="ECO:0000256" key="2">
    <source>
        <dbReference type="SAM" id="MobiDB-lite"/>
    </source>
</evidence>
<evidence type="ECO:0000269" key="3">
    <source>
    </source>
</evidence>
<evidence type="ECO:0000269" key="4">
    <source>
    </source>
</evidence>
<evidence type="ECO:0000269" key="5">
    <source>
    </source>
</evidence>
<evidence type="ECO:0000269" key="6">
    <source>
    </source>
</evidence>
<evidence type="ECO:0000269" key="7">
    <source>
    </source>
</evidence>
<evidence type="ECO:0000269" key="8">
    <source>
    </source>
</evidence>
<evidence type="ECO:0000269" key="9">
    <source>
    </source>
</evidence>
<evidence type="ECO:0000269" key="10">
    <source>
    </source>
</evidence>
<evidence type="ECO:0000269" key="11">
    <source>
    </source>
</evidence>
<evidence type="ECO:0000269" key="12">
    <source>
    </source>
</evidence>
<evidence type="ECO:0000269" key="13">
    <source>
    </source>
</evidence>
<evidence type="ECO:0000269" key="14">
    <source>
    </source>
</evidence>
<evidence type="ECO:0000269" key="15">
    <source>
    </source>
</evidence>
<evidence type="ECO:0000269" key="16">
    <source>
    </source>
</evidence>
<evidence type="ECO:0000269" key="17">
    <source>
    </source>
</evidence>
<evidence type="ECO:0000269" key="18">
    <source>
    </source>
</evidence>
<evidence type="ECO:0000269" key="19">
    <source>
    </source>
</evidence>
<evidence type="ECO:0000269" key="20">
    <source>
    </source>
</evidence>
<evidence type="ECO:0000305" key="21"/>
<evidence type="ECO:0000305" key="22">
    <source>
    </source>
</evidence>
<evidence type="ECO:0000305" key="23">
    <source>
    </source>
</evidence>
<evidence type="ECO:0007829" key="24">
    <source>
        <dbReference type="PDB" id="1EVU"/>
    </source>
</evidence>
<evidence type="ECO:0007829" key="25">
    <source>
        <dbReference type="PDB" id="1EX0"/>
    </source>
</evidence>
<evidence type="ECO:0007829" key="26">
    <source>
        <dbReference type="PDB" id="1FIE"/>
    </source>
</evidence>
<evidence type="ECO:0007829" key="27">
    <source>
        <dbReference type="PDB" id="1GGU"/>
    </source>
</evidence>
<evidence type="ECO:0007829" key="28">
    <source>
        <dbReference type="PDB" id="1GGY"/>
    </source>
</evidence>
<evidence type="ECO:0007829" key="29">
    <source>
        <dbReference type="PDB" id="4KTY"/>
    </source>
</evidence>
<evidence type="ECO:0007829" key="30">
    <source>
        <dbReference type="PDB" id="5MHO"/>
    </source>
</evidence>
<evidence type="ECO:0007829" key="31">
    <source>
        <dbReference type="PDB" id="8CMU"/>
    </source>
</evidence>
<feature type="initiator methionine" description="Removed" evidence="22 23">
    <location>
        <position position="1"/>
    </location>
</feature>
<feature type="propeptide" id="PRO_0000033646" description="Activation peptide">
    <location>
        <begin position="2"/>
        <end position="38"/>
    </location>
</feature>
<feature type="chain" id="PRO_0000033647" description="Coagulation factor XIII A chain">
    <location>
        <begin position="39"/>
        <end position="732"/>
    </location>
</feature>
<feature type="region of interest" description="Disordered" evidence="2">
    <location>
        <begin position="1"/>
        <end position="27"/>
    </location>
</feature>
<feature type="active site" evidence="17">
    <location>
        <position position="315"/>
    </location>
</feature>
<feature type="active site" evidence="17">
    <location>
        <position position="374"/>
    </location>
</feature>
<feature type="active site" evidence="17">
    <location>
        <position position="397"/>
    </location>
</feature>
<feature type="binding site" evidence="20">
    <location>
        <position position="437"/>
    </location>
    <ligand>
        <name>Ca(2+)</name>
        <dbReference type="ChEBI" id="CHEBI:29108"/>
    </ligand>
</feature>
<feature type="binding site" evidence="20">
    <location>
        <position position="439"/>
    </location>
    <ligand>
        <name>Ca(2+)</name>
        <dbReference type="ChEBI" id="CHEBI:29108"/>
    </ligand>
</feature>
<feature type="binding site" evidence="20">
    <location>
        <position position="486"/>
    </location>
    <ligand>
        <name>Ca(2+)</name>
        <dbReference type="ChEBI" id="CHEBI:29108"/>
    </ligand>
</feature>
<feature type="binding site" evidence="20">
    <location>
        <position position="491"/>
    </location>
    <ligand>
        <name>Ca(2+)</name>
        <dbReference type="ChEBI" id="CHEBI:29108"/>
    </ligand>
</feature>
<feature type="site" description="Cleavage; by thrombin; to produce active factor XIII-A">
    <location>
        <begin position="38"/>
        <end position="39"/>
    </location>
</feature>
<feature type="modified residue" description="N-acetylserine" evidence="22">
    <location>
        <position position="2"/>
    </location>
</feature>
<feature type="glycosylation site" description="N-linked (GlcNAc...) asparagine" evidence="6">
    <location>
        <position position="614"/>
    </location>
</feature>
<feature type="sequence variant" id="VAR_013927" description="Higher specific activity; dbSNP:rs5985." evidence="3 19">
    <original>V</original>
    <variation>L</variation>
    <location>
        <position position="35"/>
    </location>
</feature>
<feature type="sequence variant" id="VAR_077619" description="In FA13AD; decreased intracellular protein abundance; loss of protein-glutamine gamma-glutamyltransferase activity; decreased alpha-2-antiplasmin to fibrin cross-linking activity; no effect on fibrin alpha chain and gamma chain cross-linking activity; decreased clot fiber thickness; dbSNP:rs759324596." evidence="12">
    <original>R</original>
    <variation>Q</variation>
    <location>
        <position position="38"/>
    </location>
</feature>
<feature type="sequence variant" id="VAR_020910" description="In dbSNP:rs3024472.">
    <original>V</original>
    <variation>I</variation>
    <location>
        <position position="40"/>
    </location>
</feature>
<feature type="sequence variant" id="VAR_074280" description="In FA13AD; mild; no effect on intracellular protein abundance; no effect on protein-glutamine gamma-glutamyltransferase activity; no effect on alpha-2-antiplasmin to fibrin cross-linking activity; loss of fibrin alpha chain cross-linking activity; decreased clot fiber thickness; dbSNP:rs746272012." evidence="10 12">
    <original>P</original>
    <variation>L</variation>
    <location>
        <position position="167"/>
    </location>
</feature>
<feature type="sequence variant" id="VAR_077620" description="In FA13AD; decreased intracellular protein abundance; decreased protein-glutamine gamma-glutamyltransferase activity; no effect on alpha-2-antiplasmin to fibrin cross-linking activity; loss of fibrin alpha chain cross-linking activity; decreased clot fiber thickness; dbSNP:rs779361778." evidence="7 12">
    <original>Y</original>
    <variation>C</variation>
    <location>
        <position position="168"/>
    </location>
</feature>
<feature type="sequence variant" id="VAR_074281" description="In FA13AD; mild; decreased intracellular protein abundance; loss of protein-glutamine gamma-glutamyltransferase activity; decreased alpha-2-antiplasmin to fibrin cross-linking activity; decreased rate of fibrin gamma chain cross-linking activity; decreased rate of fibrin alpha chain cross-linking activity; decreased clot fiber thickness; dbSNP:rs376147795." evidence="10 12">
    <original>R</original>
    <variation>Q</variation>
    <location>
        <position position="172"/>
    </location>
</feature>
<feature type="sequence variant" id="VAR_020911" description="In dbSNP:rs3024477.">
    <original>Y</original>
    <variation>F</variation>
    <location>
        <position position="205"/>
    </location>
</feature>
<feature type="sequence variant" id="VAR_074282" description="In FA13AD." evidence="8">
    <original>G</original>
    <variation>V</variation>
    <location>
        <position position="274"/>
    </location>
</feature>
<feature type="sequence variant" id="VAR_077621" description="In FA13AD; decreased intracellular protein abundance; loss of protein-glutamine gamma-glutamyltransferase activity; loss of alpha-2-antiplasmin to fibrin cross-linking activity; loss of fibrin gamma chain cross-linking activity; decreased rate of fibrin alpha chain cross-linking activity; decreased clot fiber thickness." evidence="7 12">
    <original>P</original>
    <variation>R</variation>
    <location>
        <position position="290"/>
    </location>
</feature>
<feature type="sequence variant" id="VAR_074283" description="In FA13AD; mild; decreased intracellular protein abundance; loss of protein-glutamine gamma-glutamyltransferase activity; decreased alpha-2-antiplasmin to fibrin cross-linking activity; loss of fibrin gamma chain cross-linking activity; decreased rate of fibrin alpha chain cross-linking activity; decreased clot fiber thickness." evidence="10 12">
    <original>H</original>
    <variation>Y</variation>
    <location>
        <position position="343"/>
    </location>
</feature>
<feature type="sequence variant" id="VAR_074284" description="In FA13AD; uncertain significance." evidence="9">
    <original>A</original>
    <variation>D</variation>
    <location>
        <position position="347"/>
    </location>
</feature>
<feature type="sequence variant" id="VAR_074285" description="In FA13AD; uncertain significance." evidence="9">
    <original>W</original>
    <variation>R</variation>
    <location>
        <position position="376"/>
    </location>
</feature>
<feature type="sequence variant" id="VAR_074286" description="In FA13AD; uncertain significance; dbSNP:rs1396702202." evidence="9">
    <original>S</original>
    <variation>L</variation>
    <location>
        <position position="414"/>
    </location>
</feature>
<feature type="sequence variant" id="VAR_074287" description="In FA13AD; mild; no effect on intracellular protein abundance; no effect on protein-glutamine gamma-glutamyltransferase activity; no effect on alpha-2-antiplasmin to fibrin cross-linking activity; no effect on fibrin alpha chain and gamma chain cross-linking activity; decreased clot fiber thickness." evidence="10 12">
    <original>Q</original>
    <variation>R</variation>
    <location>
        <position position="416"/>
    </location>
</feature>
<feature type="sequence variant" id="VAR_074288" description="In FA13AD; mild; decreased intracellular protein abundance; loss of protein-glutamine gamma-glutamyltransferase activity; decreased alpha-2-antiplasmin to fibrin cross-linking activity; loss of fibrin gamma chain cross-linking activity; decreased clot fiber thickness." evidence="10 12">
    <original>L</original>
    <variation>P</variation>
    <location>
        <position position="530"/>
    </location>
</feature>
<feature type="sequence variant" id="VAR_077622" description="In FA13AD; decreased intracellular protein abundance; no effect on protein-glutamine gamma-glutamyltransferase activity; no effect on alpha-2-antiplasmin to fibrin cross-linking activity; no effect on fibrin alpha chain and gamma chain cross-linking activity; decreased clot fiber thickness; dbSNP:rs367679357." evidence="7 12">
    <original>R</original>
    <variation>Q</variation>
    <location>
        <position position="541"/>
    </location>
</feature>
<feature type="sequence variant" id="VAR_013928" description="In dbSNP:rs5984." evidence="3">
    <original>T</original>
    <variation>I</variation>
    <location>
        <position position="551"/>
    </location>
</feature>
<feature type="sequence variant" id="VAR_007471" description="In allele F13A*1A, allele F13A*2A and allele F13*(2)A; dbSNP:rs5982." evidence="3 14 18">
    <original>P</original>
    <variation>L</variation>
    <location>
        <position position="565"/>
    </location>
</feature>
<feature type="sequence variant" id="VAR_013929" description="In dbSNP:rs5983." evidence="3">
    <original>L</original>
    <variation>Q</variation>
    <location>
        <position position="589"/>
    </location>
</feature>
<feature type="sequence variant" id="VAR_077623" description="In FA13AD; no effect on intracellular protein abundance; increased protein-glutamine gamma-glutamyltransferase activity; no effect on alpha-2-antiplasmin to fibrin cross-linking activity; no effect on fibrin alpha chain and gamma chain cross-linking activity; decreased clot fiber thickness; dbSNP:rs138754417." evidence="7 12">
    <original>G</original>
    <variation>S</variation>
    <location>
        <position position="593"/>
    </location>
</feature>
<feature type="sequence variant" id="VAR_074289" description="In FA13AD; mild; decreased intracellular protein abundance; loss of protein-glutamine gamma-glutamyltransferase activity; loss of alpha-2-antiplasmin to fibrin cross-linking activity; decreased rate of fibrin gamma chain cross-linking activity; loss of fibrin alpha chain cross-linking activity; decreased clot fiber thickness; dbSNP:rs757172838." evidence="10 12">
    <original>Q</original>
    <variation>K</variation>
    <location>
        <position position="602"/>
    </location>
</feature>
<feature type="sequence variant" id="VAR_077624" description="In FA13AD; decreased intracellular protein abundance; decreased protein-glutamine gamma-glutamyltransferase activity; decreased alpha-2-antiplasmin to fibrin cross-linking activity; no effect on fibrin alpha chain and gamma chain cross-linking activity; decreased clot fiber thickness; dbSNP:rs369187276." evidence="7 12">
    <original>R</original>
    <variation>H</variation>
    <location>
        <position position="612"/>
    </location>
</feature>
<feature type="sequence variant" id="VAR_060545" description="In dbSNP:rs17852475." evidence="5">
    <original>T</original>
    <variation>I</variation>
    <location>
        <position position="650"/>
    </location>
</feature>
<feature type="sequence variant" id="VAR_007472" description="In allele F13A*2A and allele F13A*2B; dbSNP:rs5987." evidence="3 15 18">
    <original>V</original>
    <variation>I</variation>
    <location>
        <position position="651"/>
    </location>
</feature>
<feature type="sequence variant" id="VAR_007473" description="In allele F13A*2A and allele F13A*2B; dbSNP:rs5988." evidence="13 14 15 18">
    <original>E</original>
    <variation>Q</variation>
    <location>
        <position position="652"/>
    </location>
</feature>
<feature type="sequence variant" id="VAR_077625" description="In FA13AD; decreased intracellular protein abundance; decreased protein-glutamine gamma-glutamyltransferase activity; decreased alpha-2-antiplasmin to fibrin cross-linking activity; decreased rate of fibrin alpha chain cross-linking activity; decreased clot fiber thickness; dbSNP:rs375129902." evidence="7 12">
    <original>D</original>
    <variation>G</variation>
    <location>
        <position position="669"/>
    </location>
</feature>
<feature type="sequence variant" id="VAR_007474" description="In FA13AD; dbSNP:rs121913064." evidence="4">
    <original>R</original>
    <variation>H</variation>
    <location>
        <position position="682"/>
    </location>
</feature>
<feature type="sequence variant" id="VAR_074290" description="In FA13AD; mild; decreased intracellular protein abundance; loss of protein-glutamine gamma-glutamyltransferase activity; decreased alpha-2-antiplasmin to fibrin cross-linking activity; decreased rate of fibrin alpha chain cross-linking activity; decreased clot fiber thickness; dbSNP:rs377484555." evidence="10 12">
    <original>R</original>
    <variation>Q</variation>
    <location>
        <position position="704"/>
    </location>
</feature>
<feature type="sequence variant" id="VAR_074291" description="In FA13AD; mild; decreased intracellular protein abundance; loss of protein-glutamine gamma-glutamyltransferase activity; decreased alpha-2-antiplasmin to fibrin cross-linking activity; decreased rate of fibrin gamma chain cross-linking activity; decreased rate of fibrin alpha chain cross-linking activity; decreased clot fiber thickness; dbSNP:rs778206273." evidence="10 12">
    <original>R</original>
    <variation>G</variation>
    <location>
        <position position="716"/>
    </location>
</feature>
<feature type="sequence conflict" description="In Ref. 9; AA sequence." evidence="21" ref="9">
    <location>
        <position position="36"/>
    </location>
</feature>
<feature type="sequence conflict" description="In Ref. 2; AAA52488." evidence="21" ref="2">
    <original>F</original>
    <variation>L</variation>
    <location>
        <position position="89"/>
    </location>
</feature>
<feature type="strand" evidence="29">
    <location>
        <begin position="29"/>
        <end position="32"/>
    </location>
</feature>
<feature type="helix" evidence="29">
    <location>
        <begin position="42"/>
        <end position="44"/>
    </location>
</feature>
<feature type="strand" evidence="29">
    <location>
        <begin position="48"/>
        <end position="52"/>
    </location>
</feature>
<feature type="helix" evidence="29">
    <location>
        <begin position="60"/>
        <end position="64"/>
    </location>
</feature>
<feature type="strand" evidence="27">
    <location>
        <begin position="68"/>
        <end position="71"/>
    </location>
</feature>
<feature type="strand" evidence="29">
    <location>
        <begin position="74"/>
        <end position="78"/>
    </location>
</feature>
<feature type="strand" evidence="29">
    <location>
        <begin position="81"/>
        <end position="91"/>
    </location>
</feature>
<feature type="turn" evidence="29">
    <location>
        <begin position="95"/>
        <end position="97"/>
    </location>
</feature>
<feature type="strand" evidence="29">
    <location>
        <begin position="100"/>
        <end position="105"/>
    </location>
</feature>
<feature type="strand" evidence="29">
    <location>
        <begin position="107"/>
        <end position="109"/>
    </location>
</feature>
<feature type="helix" evidence="29">
    <location>
        <begin position="112"/>
        <end position="114"/>
    </location>
</feature>
<feature type="strand" evidence="29">
    <location>
        <begin position="116"/>
        <end position="125"/>
    </location>
</feature>
<feature type="strand" evidence="29">
    <location>
        <begin position="132"/>
        <end position="139"/>
    </location>
</feature>
<feature type="strand" evidence="29">
    <location>
        <begin position="142"/>
        <end position="148"/>
    </location>
</feature>
<feature type="strand" evidence="29">
    <location>
        <begin position="156"/>
        <end position="166"/>
    </location>
</feature>
<feature type="strand" evidence="29">
    <location>
        <begin position="169"/>
        <end position="172"/>
    </location>
</feature>
<feature type="helix" evidence="29">
    <location>
        <begin position="177"/>
        <end position="179"/>
    </location>
</feature>
<feature type="strand" evidence="29">
    <location>
        <begin position="181"/>
        <end position="184"/>
    </location>
</feature>
<feature type="helix" evidence="29">
    <location>
        <begin position="199"/>
        <end position="205"/>
    </location>
</feature>
<feature type="strand" evidence="29">
    <location>
        <begin position="210"/>
        <end position="217"/>
    </location>
</feature>
<feature type="strand" evidence="29">
    <location>
        <begin position="220"/>
        <end position="227"/>
    </location>
</feature>
<feature type="helix" evidence="29">
    <location>
        <begin position="235"/>
        <end position="245"/>
    </location>
</feature>
<feature type="helix" evidence="29">
    <location>
        <begin position="250"/>
        <end position="252"/>
    </location>
</feature>
<feature type="helix" evidence="29">
    <location>
        <begin position="256"/>
        <end position="266"/>
    </location>
</feature>
<feature type="turn" evidence="29">
    <location>
        <begin position="270"/>
        <end position="272"/>
    </location>
</feature>
<feature type="strand" evidence="29">
    <location>
        <begin position="275"/>
        <end position="278"/>
    </location>
</feature>
<feature type="helix" evidence="29">
    <location>
        <begin position="290"/>
        <end position="292"/>
    </location>
</feature>
<feature type="helix" evidence="29">
    <location>
        <begin position="297"/>
        <end position="306"/>
    </location>
</feature>
<feature type="strand" evidence="29">
    <location>
        <begin position="310"/>
        <end position="313"/>
    </location>
</feature>
<feature type="helix" evidence="29">
    <location>
        <begin position="315"/>
        <end position="329"/>
    </location>
</feature>
<feature type="strand" evidence="29">
    <location>
        <begin position="333"/>
        <end position="343"/>
    </location>
</feature>
<feature type="strand" evidence="29">
    <location>
        <begin position="345"/>
        <end position="355"/>
    </location>
</feature>
<feature type="strand" evidence="29">
    <location>
        <begin position="359"/>
        <end position="361"/>
    </location>
</feature>
<feature type="turn" evidence="29">
    <location>
        <begin position="363"/>
        <end position="365"/>
    </location>
</feature>
<feature type="strand" evidence="29">
    <location>
        <begin position="369"/>
        <end position="381"/>
    </location>
</feature>
<feature type="strand" evidence="28">
    <location>
        <begin position="384"/>
        <end position="386"/>
    </location>
</feature>
<feature type="strand" evidence="29">
    <location>
        <begin position="392"/>
        <end position="396"/>
    </location>
</feature>
<feature type="strand" evidence="29">
    <location>
        <begin position="402"/>
        <end position="404"/>
    </location>
</feature>
<feature type="strand" evidence="24">
    <location>
        <begin position="406"/>
        <end position="414"/>
    </location>
</feature>
<feature type="helix" evidence="29">
    <location>
        <begin position="415"/>
        <end position="419"/>
    </location>
</feature>
<feature type="strand" evidence="29">
    <location>
        <begin position="425"/>
        <end position="428"/>
    </location>
</feature>
<feature type="helix" evidence="29">
    <location>
        <begin position="429"/>
        <end position="437"/>
    </location>
</feature>
<feature type="strand" evidence="29">
    <location>
        <begin position="439"/>
        <end position="445"/>
    </location>
</feature>
<feature type="turn" evidence="26">
    <location>
        <begin position="447"/>
        <end position="449"/>
    </location>
</feature>
<feature type="strand" evidence="29">
    <location>
        <begin position="451"/>
        <end position="461"/>
    </location>
</feature>
<feature type="strand" evidence="29">
    <location>
        <begin position="464"/>
        <end position="468"/>
    </location>
</feature>
<feature type="strand" evidence="25">
    <location>
        <begin position="470"/>
        <end position="473"/>
    </location>
</feature>
<feature type="strand" evidence="29">
    <location>
        <begin position="475"/>
        <end position="477"/>
    </location>
</feature>
<feature type="helix" evidence="29">
    <location>
        <begin position="479"/>
        <end position="482"/>
    </location>
</feature>
<feature type="helix" evidence="29">
    <location>
        <begin position="489"/>
        <end position="501"/>
    </location>
</feature>
<feature type="helix" evidence="31">
    <location>
        <begin position="509"/>
        <end position="511"/>
    </location>
</feature>
<feature type="strand" evidence="29">
    <location>
        <begin position="519"/>
        <end position="527"/>
    </location>
</feature>
<feature type="strand" evidence="29">
    <location>
        <begin position="534"/>
        <end position="542"/>
    </location>
</feature>
<feature type="strand" evidence="29">
    <location>
        <begin position="544"/>
        <end position="546"/>
    </location>
</feature>
<feature type="strand" evidence="29">
    <location>
        <begin position="548"/>
        <end position="559"/>
    </location>
</feature>
<feature type="strand" evidence="30">
    <location>
        <begin position="561"/>
        <end position="563"/>
    </location>
</feature>
<feature type="strand" evidence="29">
    <location>
        <begin position="565"/>
        <end position="578"/>
    </location>
</feature>
<feature type="strand" evidence="29">
    <location>
        <begin position="580"/>
        <end position="590"/>
    </location>
</feature>
<feature type="helix" evidence="29">
    <location>
        <begin position="592"/>
        <end position="595"/>
    </location>
</feature>
<feature type="helix" evidence="29">
    <location>
        <begin position="596"/>
        <end position="598"/>
    </location>
</feature>
<feature type="helix" evidence="31">
    <location>
        <begin position="601"/>
        <end position="603"/>
    </location>
</feature>
<feature type="strand" evidence="29">
    <location>
        <begin position="604"/>
        <end position="613"/>
    </location>
</feature>
<feature type="turn" evidence="29">
    <location>
        <begin position="614"/>
        <end position="617"/>
    </location>
</feature>
<feature type="strand" evidence="29">
    <location>
        <begin position="618"/>
        <end position="626"/>
    </location>
</feature>
<feature type="strand" evidence="29">
    <location>
        <begin position="633"/>
        <end position="639"/>
    </location>
</feature>
<feature type="strand" evidence="29">
    <location>
        <begin position="647"/>
        <end position="654"/>
    </location>
</feature>
<feature type="strand" evidence="29">
    <location>
        <begin position="657"/>
        <end position="659"/>
    </location>
</feature>
<feature type="strand" evidence="29">
    <location>
        <begin position="661"/>
        <end position="670"/>
    </location>
</feature>
<feature type="turn" evidence="29">
    <location>
        <begin position="671"/>
        <end position="673"/>
    </location>
</feature>
<feature type="strand" evidence="29">
    <location>
        <begin position="674"/>
        <end position="684"/>
    </location>
</feature>
<feature type="strand" evidence="29">
    <location>
        <begin position="689"/>
        <end position="696"/>
    </location>
</feature>
<feature type="strand" evidence="29">
    <location>
        <begin position="702"/>
        <end position="711"/>
    </location>
</feature>
<feature type="strand" evidence="29">
    <location>
        <begin position="713"/>
        <end position="727"/>
    </location>
</feature>
<gene>
    <name type="primary">F13A1</name>
    <name type="synonym">F13A</name>
</gene>
<reference key="1">
    <citation type="journal article" date="1986" name="Biochemistry">
        <title>Amino acid sequence of the a subunit of human factor XIII.</title>
        <authorList>
            <person name="Ichinose A."/>
            <person name="Hendrickson L.E."/>
            <person name="Fujikawa K."/>
            <person name="Davie E.W."/>
        </authorList>
    </citation>
    <scope>NUCLEOTIDE SEQUENCE [MRNA]</scope>
    <scope>VARIANTS ILE-651 AND GLN-652</scope>
</reference>
<reference key="2">
    <citation type="journal article" date="1986" name="Proc. Natl. Acad. Sci. U.S.A.">
        <title>Characterization of cDNA coding for human factor XIIIa.</title>
        <authorList>
            <person name="Grundmann U."/>
            <person name="Amann E."/>
            <person name="Zettlmeissl G."/>
            <person name="Kuepper H.A."/>
        </authorList>
    </citation>
    <scope>NUCLEOTIDE SEQUENCE [MRNA]</scope>
    <scope>VARIANT GLN-652</scope>
</reference>
<reference key="3">
    <citation type="journal article" date="1988" name="Proc. Natl. Acad. Sci. U.S.A.">
        <title>Characterization of the gene for the a subunit of human factor XIII (plasma transglutaminase), a blood coagulation factor.</title>
        <authorList>
            <person name="Ichinose A."/>
            <person name="Davie E.W."/>
        </authorList>
    </citation>
    <scope>NUCLEOTIDE SEQUENCE [GENOMIC DNA]</scope>
    <scope>VARIANTS LEU-565 AND GLN-652</scope>
</reference>
<reference key="4">
    <citation type="submission" date="2005-03" db="EMBL/GenBank/DDBJ databases">
        <authorList>
            <person name="Totoki Y."/>
            <person name="Toyoda A."/>
            <person name="Takeda T."/>
            <person name="Sakaki Y."/>
            <person name="Tanaka A."/>
            <person name="Yokoyama S."/>
            <person name="Ohara O."/>
            <person name="Nagase T."/>
            <person name="Kikuno R.F."/>
        </authorList>
    </citation>
    <scope>NUCLEOTIDE SEQUENCE [LARGE SCALE MRNA]</scope>
    <source>
        <tissue>Brain</tissue>
    </source>
</reference>
<reference key="5">
    <citation type="submission" date="2001-09" db="EMBL/GenBank/DDBJ databases">
        <authorList>
            <consortium name="SeattleSNPs variation discovery resource"/>
        </authorList>
    </citation>
    <scope>NUCLEOTIDE SEQUENCE [GENOMIC DNA]</scope>
</reference>
<reference key="6">
    <citation type="journal article" date="2003" name="Nature">
        <title>The DNA sequence and analysis of human chromosome 6.</title>
        <authorList>
            <person name="Mungall A.J."/>
            <person name="Palmer S.A."/>
            <person name="Sims S.K."/>
            <person name="Edwards C.A."/>
            <person name="Ashurst J.L."/>
            <person name="Wilming L."/>
            <person name="Jones M.C."/>
            <person name="Horton R."/>
            <person name="Hunt S.E."/>
            <person name="Scott C.E."/>
            <person name="Gilbert J.G.R."/>
            <person name="Clamp M.E."/>
            <person name="Bethel G."/>
            <person name="Milne S."/>
            <person name="Ainscough R."/>
            <person name="Almeida J.P."/>
            <person name="Ambrose K.D."/>
            <person name="Andrews T.D."/>
            <person name="Ashwell R.I.S."/>
            <person name="Babbage A.K."/>
            <person name="Bagguley C.L."/>
            <person name="Bailey J."/>
            <person name="Banerjee R."/>
            <person name="Barker D.J."/>
            <person name="Barlow K.F."/>
            <person name="Bates K."/>
            <person name="Beare D.M."/>
            <person name="Beasley H."/>
            <person name="Beasley O."/>
            <person name="Bird C.P."/>
            <person name="Blakey S.E."/>
            <person name="Bray-Allen S."/>
            <person name="Brook J."/>
            <person name="Brown A.J."/>
            <person name="Brown J.Y."/>
            <person name="Burford D.C."/>
            <person name="Burrill W."/>
            <person name="Burton J."/>
            <person name="Carder C."/>
            <person name="Carter N.P."/>
            <person name="Chapman J.C."/>
            <person name="Clark S.Y."/>
            <person name="Clark G."/>
            <person name="Clee C.M."/>
            <person name="Clegg S."/>
            <person name="Cobley V."/>
            <person name="Collier R.E."/>
            <person name="Collins J.E."/>
            <person name="Colman L.K."/>
            <person name="Corby N.R."/>
            <person name="Coville G.J."/>
            <person name="Culley K.M."/>
            <person name="Dhami P."/>
            <person name="Davies J."/>
            <person name="Dunn M."/>
            <person name="Earthrowl M.E."/>
            <person name="Ellington A.E."/>
            <person name="Evans K.A."/>
            <person name="Faulkner L."/>
            <person name="Francis M.D."/>
            <person name="Frankish A."/>
            <person name="Frankland J."/>
            <person name="French L."/>
            <person name="Garner P."/>
            <person name="Garnett J."/>
            <person name="Ghori M.J."/>
            <person name="Gilby L.M."/>
            <person name="Gillson C.J."/>
            <person name="Glithero R.J."/>
            <person name="Grafham D.V."/>
            <person name="Grant M."/>
            <person name="Gribble S."/>
            <person name="Griffiths C."/>
            <person name="Griffiths M.N.D."/>
            <person name="Hall R."/>
            <person name="Halls K.S."/>
            <person name="Hammond S."/>
            <person name="Harley J.L."/>
            <person name="Hart E.A."/>
            <person name="Heath P.D."/>
            <person name="Heathcott R."/>
            <person name="Holmes S.J."/>
            <person name="Howden P.J."/>
            <person name="Howe K.L."/>
            <person name="Howell G.R."/>
            <person name="Huckle E."/>
            <person name="Humphray S.J."/>
            <person name="Humphries M.D."/>
            <person name="Hunt A.R."/>
            <person name="Johnson C.M."/>
            <person name="Joy A.A."/>
            <person name="Kay M."/>
            <person name="Keenan S.J."/>
            <person name="Kimberley A.M."/>
            <person name="King A."/>
            <person name="Laird G.K."/>
            <person name="Langford C."/>
            <person name="Lawlor S."/>
            <person name="Leongamornlert D.A."/>
            <person name="Leversha M."/>
            <person name="Lloyd C.R."/>
            <person name="Lloyd D.M."/>
            <person name="Loveland J.E."/>
            <person name="Lovell J."/>
            <person name="Martin S."/>
            <person name="Mashreghi-Mohammadi M."/>
            <person name="Maslen G.L."/>
            <person name="Matthews L."/>
            <person name="McCann O.T."/>
            <person name="McLaren S.J."/>
            <person name="McLay K."/>
            <person name="McMurray A."/>
            <person name="Moore M.J.F."/>
            <person name="Mullikin J.C."/>
            <person name="Niblett D."/>
            <person name="Nickerson T."/>
            <person name="Novik K.L."/>
            <person name="Oliver K."/>
            <person name="Overton-Larty E.K."/>
            <person name="Parker A."/>
            <person name="Patel R."/>
            <person name="Pearce A.V."/>
            <person name="Peck A.I."/>
            <person name="Phillimore B.J.C.T."/>
            <person name="Phillips S."/>
            <person name="Plumb R.W."/>
            <person name="Porter K.M."/>
            <person name="Ramsey Y."/>
            <person name="Ranby S.A."/>
            <person name="Rice C.M."/>
            <person name="Ross M.T."/>
            <person name="Searle S.M."/>
            <person name="Sehra H.K."/>
            <person name="Sheridan E."/>
            <person name="Skuce C.D."/>
            <person name="Smith S."/>
            <person name="Smith M."/>
            <person name="Spraggon L."/>
            <person name="Squares S.L."/>
            <person name="Steward C.A."/>
            <person name="Sycamore N."/>
            <person name="Tamlyn-Hall G."/>
            <person name="Tester J."/>
            <person name="Theaker A.J."/>
            <person name="Thomas D.W."/>
            <person name="Thorpe A."/>
            <person name="Tracey A."/>
            <person name="Tromans A."/>
            <person name="Tubby B."/>
            <person name="Wall M."/>
            <person name="Wallis J.M."/>
            <person name="West A.P."/>
            <person name="White S.S."/>
            <person name="Whitehead S.L."/>
            <person name="Whittaker H."/>
            <person name="Wild A."/>
            <person name="Willey D.J."/>
            <person name="Wilmer T.E."/>
            <person name="Wood J.M."/>
            <person name="Wray P.W."/>
            <person name="Wyatt J.C."/>
            <person name="Young L."/>
            <person name="Younger R.M."/>
            <person name="Bentley D.R."/>
            <person name="Coulson A."/>
            <person name="Durbin R.M."/>
            <person name="Hubbard T."/>
            <person name="Sulston J.E."/>
            <person name="Dunham I."/>
            <person name="Rogers J."/>
            <person name="Beck S."/>
        </authorList>
    </citation>
    <scope>NUCLEOTIDE SEQUENCE [LARGE SCALE GENOMIC DNA]</scope>
</reference>
<reference key="7">
    <citation type="journal article" date="2004" name="Genome Res.">
        <title>The status, quality, and expansion of the NIH full-length cDNA project: the Mammalian Gene Collection (MGC).</title>
        <authorList>
            <consortium name="The MGC Project Team"/>
        </authorList>
    </citation>
    <scope>NUCLEOTIDE SEQUENCE [LARGE SCALE MRNA]</scope>
    <scope>VARIANT ILE-650</scope>
    <source>
        <tissue>Pancreas</tissue>
    </source>
</reference>
<reference key="8">
    <citation type="journal article" date="1986" name="Proc. Natl. Acad. Sci. U.S.A.">
        <title>Primary structure of blood coagulation factor XIIIa (fibrinoligase, transglutaminase) from human placenta.</title>
        <authorList>
            <person name="Takahashi N."/>
            <person name="Takahashi Y."/>
            <person name="Putnam F.W."/>
        </authorList>
    </citation>
    <scope>PROTEIN SEQUENCE OF 2-731</scope>
    <scope>CLEAVAGE OF INITIATOR METHIONINE</scope>
    <scope>ACETYLATION AT SER-2</scope>
</reference>
<reference key="9">
    <citation type="journal article" date="1974" name="Biochemistry">
        <title>Amino acid sequence studies on factor XIII and the peptide released during its activation by thrombin.</title>
        <authorList>
            <person name="Takagi T."/>
            <person name="Doolittle R.F."/>
        </authorList>
    </citation>
    <scope>PROTEIN SEQUENCE OF 2-44</scope>
</reference>
<reference key="10">
    <citation type="journal article" date="1973" name="J. Biol. Chem.">
        <title>Human Factor XIII from plasma and platelets. Molecular weights, subunit structures, proteolytic activation, and cross-linking of fibrinogen and fibrin.</title>
        <authorList>
            <person name="Schwartz M.L."/>
            <person name="Pizzo S.V."/>
            <person name="Hill R.L."/>
            <person name="McKee P.A."/>
        </authorList>
    </citation>
    <scope>SUBCELLULAR LOCATION</scope>
    <scope>SUBUNIT</scope>
</reference>
<reference key="11">
    <citation type="journal article" date="2005" name="J. Proteome Res.">
        <title>Human plasma N-glycoproteome analysis by immunoaffinity subtraction, hydrazide chemistry, and mass spectrometry.</title>
        <authorList>
            <person name="Liu T."/>
            <person name="Qian W.-J."/>
            <person name="Gritsenko M.A."/>
            <person name="Camp D.G. II"/>
            <person name="Monroe M.E."/>
            <person name="Moore R.J."/>
            <person name="Smith R.D."/>
        </authorList>
    </citation>
    <scope>GLYCOSYLATION [LARGE SCALE ANALYSIS] AT ASN-614</scope>
    <source>
        <tissue>Plasma</tissue>
    </source>
</reference>
<reference key="12">
    <citation type="journal article" date="2011" name="Physiol. Rev.">
        <title>Factor XIII: a coagulation factor with multiple plasmatic and cellular functions.</title>
        <authorList>
            <person name="Muszbek L."/>
            <person name="Bereczky Z."/>
            <person name="Bagoly Z."/>
            <person name="Komaromi I."/>
            <person name="Katona E."/>
        </authorList>
    </citation>
    <scope>REVIEW</scope>
</reference>
<reference key="13">
    <citation type="journal article" date="2015" name="Mol. Genet. Genomic Med.">
        <title>Structural and functional influences of coagulation factor XIII subunit B heterozygous missense mutants.</title>
        <authorList>
            <person name="Thomas A."/>
            <person name="Biswas A."/>
            <person name="Ivaskevicius V."/>
            <person name="Oldenburg J."/>
        </authorList>
    </citation>
    <scope>INTERACTION WITH F13B</scope>
</reference>
<reference key="14">
    <citation type="journal article" date="1994" name="Proc. Natl. Acad. Sci. U.S.A.">
        <title>Three-dimensional structure of a transglutaminase: human blood coagulation factor XIII.</title>
        <authorList>
            <person name="Yee V.C."/>
            <person name="Pedersen L.C."/>
            <person name="Trong I.L."/>
            <person name="Bishop P.D."/>
            <person name="Stenkamp R.E."/>
            <person name="Teller D.C."/>
        </authorList>
    </citation>
    <scope>X-RAY CRYSTALLOGRAPHY (2.4 ANGSTROMS)</scope>
    <scope>ACTIVE SITE</scope>
</reference>
<reference key="15">
    <citation type="journal article" date="1995" name="Thromb. Res.">
        <title>Structural evidence that the activation peptide is not released upon thrombin cleavage of factor XIII.</title>
        <authorList>
            <person name="Yee V.C."/>
            <person name="Pedersen L.C."/>
            <person name="Bishop P.D."/>
            <person name="Stenkamp R.E."/>
            <person name="Teller D.C."/>
        </authorList>
    </citation>
    <scope>X-RAY CRYSTALLOGRAPHY (2.5 ANGSTROMS)</scope>
    <scope>CALCIUM-BINDING</scope>
    <scope>COFACTOR</scope>
</reference>
<reference key="16">
    <citation type="journal article" date="1998" name="FEBS Lett.">
        <title>Two non-proline cis peptide bonds may be important for factor XIII function.</title>
        <authorList>
            <person name="Weiss M.S."/>
            <person name="Metzner H.J."/>
            <person name="Hilgenfeld R."/>
        </authorList>
    </citation>
    <scope>X-RAY CRYSTALLOGRAPHY (2.1 ANGSTROMS)</scope>
</reference>
<reference key="17">
    <citation type="journal article" date="1999" name="J. Biol. Chem.">
        <title>Identification of the calcium binding site and a novel ytterbium site in blood coagulation factor XIII by X-ray crystallography.</title>
        <authorList>
            <person name="Fox B.A."/>
            <person name="Yee V.C."/>
            <person name="Pedersen L.C."/>
            <person name="le Trong I."/>
            <person name="Bishop P.D."/>
            <person name="Stenkamp R.E."/>
            <person name="Teller D.C."/>
        </authorList>
    </citation>
    <scope>X-RAY CRYSTALLOGRAPHY (2.5 ANGSTROMS)</scope>
</reference>
<reference key="18">
    <citation type="journal article" date="1994" name="Hum. Genet.">
        <title>Molecular basis for subtypic differences of the 'a' subunit of coagulation factor XIII with description of the genesis of the subtypes.</title>
        <authorList>
            <person name="Suzuki K."/>
            <person name="Iwata M."/>
            <person name="Ito S."/>
            <person name="Matsui K."/>
            <person name="Uchida A."/>
            <person name="Mizoi Y."/>
        </authorList>
    </citation>
    <scope>POLYMORPHISM</scope>
</reference>
<reference key="19">
    <citation type="journal article" date="1992" name="Blood">
        <title>Identification of a point mutation in factor XIII A subunit deficiency.</title>
        <authorList>
            <person name="Board P."/>
            <person name="Coggan M."/>
            <person name="Miloszewski K."/>
        </authorList>
    </citation>
    <scope>VARIANT FA13AD HIS-682</scope>
    <scope>INVOLVEMENT IN FA13AD</scope>
</reference>
<reference key="20">
    <citation type="journal article" date="1998" name="Blood">
        <title>The Val34Leu polymorphism in the A subunit of coagulation factor XIII contributes to the large normal range in activity and demonstrates that the activation peptide plays a role in catalytic activity.</title>
        <authorList>
            <person name="Kangsadalampai S."/>
            <person name="Board P.G."/>
        </authorList>
    </citation>
    <scope>CHARACTERIZATION OF VARIANT LEU-35</scope>
</reference>
<reference key="21">
    <citation type="journal article" date="1999" name="Nat. Genet.">
        <title>Characterization of single-nucleotide polymorphisms in coding regions of human genes.</title>
        <authorList>
            <person name="Cargill M."/>
            <person name="Altshuler D."/>
            <person name="Ireland J."/>
            <person name="Sklar P."/>
            <person name="Ardlie K."/>
            <person name="Patil N."/>
            <person name="Shaw N."/>
            <person name="Lane C.R."/>
            <person name="Lim E.P."/>
            <person name="Kalyanaraman N."/>
            <person name="Nemesh J."/>
            <person name="Ziaugra L."/>
            <person name="Friedland L."/>
            <person name="Rolfe A."/>
            <person name="Warrington J."/>
            <person name="Lipshutz R."/>
            <person name="Daley G.Q."/>
            <person name="Lander E.S."/>
        </authorList>
    </citation>
    <scope>VARIANTS LEU-35; ILE-551; LEU-565; GLN-589 AND ILE-651</scope>
</reference>
<reference key="22">
    <citation type="journal article" date="1999" name="Nat. Genet.">
        <authorList>
            <person name="Cargill M."/>
            <person name="Altshuler D."/>
            <person name="Ireland J."/>
            <person name="Sklar P."/>
            <person name="Ardlie K."/>
            <person name="Patil N."/>
            <person name="Shaw N."/>
            <person name="Lane C.R."/>
            <person name="Lim E.P."/>
            <person name="Kalyanaraman N."/>
            <person name="Nemesh J."/>
            <person name="Ziaugra L."/>
            <person name="Friedland L."/>
            <person name="Rolfe A."/>
            <person name="Warrington J."/>
            <person name="Lipshutz R."/>
            <person name="Daley G.Q."/>
            <person name="Lander E.S."/>
        </authorList>
    </citation>
    <scope>ERRATUM OF PUBMED:10391209</scope>
</reference>
<reference key="23">
    <citation type="journal article" date="2010" name="Haematologica">
        <title>Identification of eight novel coagulation factor XIII subunit A mutations: implied consequences for structure and function.</title>
        <authorList>
            <person name="Ivaskevicius V."/>
            <person name="Biswas A."/>
            <person name="Bevans C."/>
            <person name="Schroeder V."/>
            <person name="Kohler H.P."/>
            <person name="Rott H."/>
            <person name="Halimeh S."/>
            <person name="Petrides P.E."/>
            <person name="Lenk H."/>
            <person name="Krause M."/>
            <person name="Miterski B."/>
            <person name="Harbrecht U."/>
            <person name="Oldenburg J."/>
        </authorList>
    </citation>
    <scope>VARIANTS FA13AD CYS-168; ARG-290; GLN-541; SER-593; HIS-612 AND GLY-669</scope>
</reference>
<reference key="24">
    <citation type="journal article" date="2014" name="Ann. Hematol.">
        <title>Eight novel F13A1 gene missense mutations in patients with mild FXIII deficiency: in silico analysis suggests changes in FXIII-A subunit structure/function.</title>
        <authorList>
            <person name="Biswas A."/>
            <person name="Ivaskevicius V."/>
            <person name="Thomas A."/>
            <person name="Varvenne M."/>
            <person name="Brand B."/>
            <person name="Rott H."/>
            <person name="Haussels I."/>
            <person name="Ruehl H."/>
            <person name="Scholz U."/>
            <person name="Klamroth R."/>
            <person name="Oldenburg J."/>
        </authorList>
    </citation>
    <scope>VARIANTS FA13AD LEU-167; GLN-172; TYR-343; ARG-416; PRO-530; LYS-602; GLN-704 AND GLY-716</scope>
</reference>
<reference key="25">
    <citation type="journal article" date="2014" name="Haemophilia">
        <title>Severe congenital factor XIII deficiency caused by novel W187X and G273V mutations in the F13A gene; diagnosis and classification according to the ISTH/SSC guidelines.</title>
        <authorList>
            <person name="Souri M."/>
            <person name="Biswas A."/>
            <person name="Misawa M."/>
            <person name="Omura H."/>
            <person name="Ichinose A."/>
        </authorList>
    </citation>
    <scope>VARIANT FA13AD VAL-274</scope>
</reference>
<reference key="26">
    <citation type="journal article" date="2014" name="Haemophilia">
        <title>Congenital factor XIII deficiency in Pakistan: characterization of seven families and identification of four novel mutations.</title>
        <authorList>
            <person name="Borhany M."/>
            <person name="Handrkova H."/>
            <person name="Cairo A."/>
            <person name="Schroeder V."/>
            <person name="Fatima N."/>
            <person name="Naz A."/>
            <person name="Amanat S."/>
            <person name="Shamsi T."/>
            <person name="Peyvandi F."/>
            <person name="Kohler H.P."/>
        </authorList>
    </citation>
    <scope>VARIANTS FA13AD ASP-347; ARG-376 AND LEU-414</scope>
</reference>
<reference key="27">
    <citation type="journal article" date="2016" name="Hum. Mutat.">
        <title>Coagulation factor XIIIA subunit missense mutations affect structure and function at the various steps of factor XIII action.</title>
        <authorList>
            <person name="Thomas A."/>
            <person name="Biswas A."/>
            <person name="Dodt J."/>
            <person name="Philippou H."/>
            <person name="Hethershaw E."/>
            <person name="Ensikat H.J."/>
            <person name="Ivaskevicius V."/>
            <person name="Oldenburg J."/>
        </authorList>
    </citation>
    <scope>CHARACTERIZATION OF VARIANTS FA13AD GLN-38; LEU-167; CYS-168; GLN-172; ARG-290; TYR-343; ARG-416; PRO-530; GLN-541; SER-593; LYS-602; HIS-612; GLY-669; GLN-704 AND GLY-716</scope>
    <scope>FUNCTION</scope>
    <scope>CATALYTIC ACTIVITY</scope>
</reference>
<dbReference type="EC" id="2.3.2.13" evidence="12"/>
<dbReference type="EMBL" id="M14539">
    <property type="protein sequence ID" value="AAA52489.1"/>
    <property type="status" value="ALT_INIT"/>
    <property type="molecule type" value="mRNA"/>
</dbReference>
<dbReference type="EMBL" id="M14354">
    <property type="protein sequence ID" value="AAA52488.1"/>
    <property type="molecule type" value="mRNA"/>
</dbReference>
<dbReference type="EMBL" id="M22001">
    <property type="protein sequence ID" value="AAA52415.1"/>
    <property type="molecule type" value="Genomic_DNA"/>
</dbReference>
<dbReference type="EMBL" id="M21987">
    <property type="protein sequence ID" value="AAA52415.1"/>
    <property type="status" value="JOINED"/>
    <property type="molecule type" value="Genomic_DNA"/>
</dbReference>
<dbReference type="EMBL" id="M21988">
    <property type="protein sequence ID" value="AAA52415.1"/>
    <property type="status" value="JOINED"/>
    <property type="molecule type" value="Genomic_DNA"/>
</dbReference>
<dbReference type="EMBL" id="M21989">
    <property type="protein sequence ID" value="AAA52415.1"/>
    <property type="status" value="JOINED"/>
    <property type="molecule type" value="Genomic_DNA"/>
</dbReference>
<dbReference type="EMBL" id="M21990">
    <property type="protein sequence ID" value="AAA52415.1"/>
    <property type="status" value="JOINED"/>
    <property type="molecule type" value="Genomic_DNA"/>
</dbReference>
<dbReference type="EMBL" id="M21991">
    <property type="protein sequence ID" value="AAA52415.1"/>
    <property type="status" value="JOINED"/>
    <property type="molecule type" value="Genomic_DNA"/>
</dbReference>
<dbReference type="EMBL" id="M21992">
    <property type="protein sequence ID" value="AAA52415.1"/>
    <property type="status" value="JOINED"/>
    <property type="molecule type" value="Genomic_DNA"/>
</dbReference>
<dbReference type="EMBL" id="M21993">
    <property type="protein sequence ID" value="AAA52415.1"/>
    <property type="status" value="JOINED"/>
    <property type="molecule type" value="Genomic_DNA"/>
</dbReference>
<dbReference type="EMBL" id="M21995">
    <property type="protein sequence ID" value="AAA52415.1"/>
    <property type="status" value="JOINED"/>
    <property type="molecule type" value="Genomic_DNA"/>
</dbReference>
<dbReference type="EMBL" id="M21996">
    <property type="protein sequence ID" value="AAA52415.1"/>
    <property type="status" value="JOINED"/>
    <property type="molecule type" value="Genomic_DNA"/>
</dbReference>
<dbReference type="EMBL" id="M21997">
    <property type="protein sequence ID" value="AAA52415.1"/>
    <property type="status" value="JOINED"/>
    <property type="molecule type" value="Genomic_DNA"/>
</dbReference>
<dbReference type="EMBL" id="M21998">
    <property type="protein sequence ID" value="AAA52415.1"/>
    <property type="status" value="JOINED"/>
    <property type="molecule type" value="Genomic_DNA"/>
</dbReference>
<dbReference type="EMBL" id="M21999">
    <property type="protein sequence ID" value="AAA52415.1"/>
    <property type="status" value="JOINED"/>
    <property type="molecule type" value="Genomic_DNA"/>
</dbReference>
<dbReference type="EMBL" id="M22000">
    <property type="protein sequence ID" value="AAA52415.1"/>
    <property type="status" value="JOINED"/>
    <property type="molecule type" value="Genomic_DNA"/>
</dbReference>
<dbReference type="EMBL" id="AB208852">
    <property type="protein sequence ID" value="BAD92089.1"/>
    <property type="status" value="ALT_INIT"/>
    <property type="molecule type" value="mRNA"/>
</dbReference>
<dbReference type="EMBL" id="AF418272">
    <property type="protein sequence ID" value="AAL12161.1"/>
    <property type="molecule type" value="Genomic_DNA"/>
</dbReference>
<dbReference type="EMBL" id="AL157775">
    <property type="status" value="NOT_ANNOTATED_CDS"/>
    <property type="molecule type" value="Genomic_DNA"/>
</dbReference>
<dbReference type="EMBL" id="AL391420">
    <property type="status" value="NOT_ANNOTATED_CDS"/>
    <property type="molecule type" value="Genomic_DNA"/>
</dbReference>
<dbReference type="EMBL" id="AL133326">
    <property type="status" value="NOT_ANNOTATED_CDS"/>
    <property type="molecule type" value="Genomic_DNA"/>
</dbReference>
<dbReference type="EMBL" id="BC027963">
    <property type="protein sequence ID" value="AAH27963.1"/>
    <property type="molecule type" value="mRNA"/>
</dbReference>
<dbReference type="CCDS" id="CCDS4496.1"/>
<dbReference type="PIR" id="A35583">
    <property type="entry name" value="EKHUX"/>
</dbReference>
<dbReference type="RefSeq" id="NP_000120.2">
    <property type="nucleotide sequence ID" value="NM_000129.4"/>
</dbReference>
<dbReference type="PDB" id="1EVU">
    <property type="method" value="X-ray"/>
    <property type="resolution" value="2.01 A"/>
    <property type="chains" value="A/B=2-732"/>
</dbReference>
<dbReference type="PDB" id="1EX0">
    <property type="method" value="X-ray"/>
    <property type="resolution" value="2.00 A"/>
    <property type="chains" value="A/B=2-732"/>
</dbReference>
<dbReference type="PDB" id="1F13">
    <property type="method" value="X-ray"/>
    <property type="resolution" value="2.10 A"/>
    <property type="chains" value="A/B=2-732"/>
</dbReference>
<dbReference type="PDB" id="1FIE">
    <property type="method" value="X-ray"/>
    <property type="resolution" value="2.50 A"/>
    <property type="chains" value="A/B=2-732"/>
</dbReference>
<dbReference type="PDB" id="1GGT">
    <property type="method" value="X-ray"/>
    <property type="resolution" value="2.65 A"/>
    <property type="chains" value="A/B=2-732"/>
</dbReference>
<dbReference type="PDB" id="1GGU">
    <property type="method" value="X-ray"/>
    <property type="resolution" value="2.10 A"/>
    <property type="chains" value="A/B=2-732"/>
</dbReference>
<dbReference type="PDB" id="1GGY">
    <property type="method" value="X-ray"/>
    <property type="resolution" value="2.50 A"/>
    <property type="chains" value="A/B=2-732"/>
</dbReference>
<dbReference type="PDB" id="1QRK">
    <property type="method" value="X-ray"/>
    <property type="resolution" value="2.50 A"/>
    <property type="chains" value="A/B=2-732"/>
</dbReference>
<dbReference type="PDB" id="4KTY">
    <property type="method" value="X-ray"/>
    <property type="resolution" value="1.98 A"/>
    <property type="chains" value="A/B=2-732"/>
</dbReference>
<dbReference type="PDB" id="5MHL">
    <property type="method" value="X-ray"/>
    <property type="resolution" value="2.40 A"/>
    <property type="chains" value="A/B=2-732"/>
</dbReference>
<dbReference type="PDB" id="5MHM">
    <property type="method" value="X-ray"/>
    <property type="resolution" value="2.12 A"/>
    <property type="chains" value="A/B=2-732"/>
</dbReference>
<dbReference type="PDB" id="5MHN">
    <property type="method" value="X-ray"/>
    <property type="resolution" value="2.48 A"/>
    <property type="chains" value="A/B=2-732"/>
</dbReference>
<dbReference type="PDB" id="5MHO">
    <property type="method" value="X-ray"/>
    <property type="resolution" value="2.92 A"/>
    <property type="chains" value="A/B=2-732"/>
</dbReference>
<dbReference type="PDB" id="8CMT">
    <property type="method" value="EM"/>
    <property type="resolution" value="3.04 A"/>
    <property type="chains" value="A/B=1-732"/>
</dbReference>
<dbReference type="PDB" id="8CMU">
    <property type="method" value="EM"/>
    <property type="resolution" value="2.41 A"/>
    <property type="chains" value="A/B=1-732"/>
</dbReference>
<dbReference type="PDBsum" id="1EVU"/>
<dbReference type="PDBsum" id="1EX0"/>
<dbReference type="PDBsum" id="1F13"/>
<dbReference type="PDBsum" id="1FIE"/>
<dbReference type="PDBsum" id="1GGT"/>
<dbReference type="PDBsum" id="1GGU"/>
<dbReference type="PDBsum" id="1GGY"/>
<dbReference type="PDBsum" id="1QRK"/>
<dbReference type="PDBsum" id="4KTY"/>
<dbReference type="PDBsum" id="5MHL"/>
<dbReference type="PDBsum" id="5MHM"/>
<dbReference type="PDBsum" id="5MHN"/>
<dbReference type="PDBsum" id="5MHO"/>
<dbReference type="PDBsum" id="8CMT"/>
<dbReference type="PDBsum" id="8CMU"/>
<dbReference type="EMDB" id="EMD-16745"/>
<dbReference type="EMDB" id="EMD-16746"/>
<dbReference type="SMR" id="P00488"/>
<dbReference type="BioGRID" id="108460">
    <property type="interactions" value="17"/>
</dbReference>
<dbReference type="ComplexPortal" id="CPX-6231">
    <property type="entry name" value="Coagulation factor XIIIa complex"/>
</dbReference>
<dbReference type="DIP" id="DIP-377N"/>
<dbReference type="FunCoup" id="P00488">
    <property type="interactions" value="327"/>
</dbReference>
<dbReference type="IntAct" id="P00488">
    <property type="interactions" value="33"/>
</dbReference>
<dbReference type="MINT" id="P00488"/>
<dbReference type="STRING" id="9606.ENSP00000264870"/>
<dbReference type="BindingDB" id="P00488"/>
<dbReference type="ChEMBL" id="CHEMBL4530"/>
<dbReference type="DrugBank" id="DB13151">
    <property type="generic name" value="Anti-inhibitor coagulant complex"/>
</dbReference>
<dbReference type="DrugBank" id="DB11571">
    <property type="generic name" value="Human thrombin"/>
</dbReference>
<dbReference type="DrugBank" id="DB00130">
    <property type="generic name" value="L-Glutamine"/>
</dbReference>
<dbReference type="DrugBank" id="DB02340">
    <property type="generic name" value="N-Acetyl-Serine"/>
</dbReference>
<dbReference type="DrugBank" id="DB11311">
    <property type="generic name" value="Prothrombin"/>
</dbReference>
<dbReference type="DrugBank" id="DB11300">
    <property type="generic name" value="Thrombin"/>
</dbReference>
<dbReference type="DrugCentral" id="P00488"/>
<dbReference type="GlyCosmos" id="P00488">
    <property type="glycosylation" value="1 site, No reported glycans"/>
</dbReference>
<dbReference type="GlyGen" id="P00488">
    <property type="glycosylation" value="4 sites, 2 N-linked glycans (2 sites), 1 O-linked glycan (1 site)"/>
</dbReference>
<dbReference type="iPTMnet" id="P00488"/>
<dbReference type="PhosphoSitePlus" id="P00488"/>
<dbReference type="BioMuta" id="F13A1"/>
<dbReference type="DMDM" id="119720"/>
<dbReference type="OGP" id="P00488"/>
<dbReference type="jPOST" id="P00488"/>
<dbReference type="MassIVE" id="P00488"/>
<dbReference type="PaxDb" id="9606-ENSP00000264870"/>
<dbReference type="PeptideAtlas" id="P00488"/>
<dbReference type="ProteomicsDB" id="51255"/>
<dbReference type="TopDownProteomics" id="P00488"/>
<dbReference type="Antibodypedia" id="882">
    <property type="antibodies" value="1454 antibodies from 42 providers"/>
</dbReference>
<dbReference type="DNASU" id="2162"/>
<dbReference type="Ensembl" id="ENST00000264870.8">
    <property type="protein sequence ID" value="ENSP00000264870.3"/>
    <property type="gene ID" value="ENSG00000124491.16"/>
</dbReference>
<dbReference type="GeneID" id="2162"/>
<dbReference type="KEGG" id="hsa:2162"/>
<dbReference type="MANE-Select" id="ENST00000264870.8">
    <property type="protein sequence ID" value="ENSP00000264870.3"/>
    <property type="RefSeq nucleotide sequence ID" value="NM_000129.4"/>
    <property type="RefSeq protein sequence ID" value="NP_000120.2"/>
</dbReference>
<dbReference type="UCSC" id="uc003mwv.4">
    <property type="organism name" value="human"/>
</dbReference>
<dbReference type="AGR" id="HGNC:3531"/>
<dbReference type="CTD" id="2162"/>
<dbReference type="DisGeNET" id="2162"/>
<dbReference type="GeneCards" id="F13A1"/>
<dbReference type="HGNC" id="HGNC:3531">
    <property type="gene designation" value="F13A1"/>
</dbReference>
<dbReference type="HPA" id="ENSG00000124491">
    <property type="expression patterns" value="Tissue enhanced (adipose tissue, placenta)"/>
</dbReference>
<dbReference type="MalaCards" id="F13A1"/>
<dbReference type="MIM" id="134570">
    <property type="type" value="gene+phenotype"/>
</dbReference>
<dbReference type="MIM" id="613225">
    <property type="type" value="phenotype"/>
</dbReference>
<dbReference type="neXtProt" id="NX_P00488"/>
<dbReference type="OpenTargets" id="ENSG00000124491"/>
<dbReference type="Orphanet" id="331">
    <property type="disease" value="Congenital factor XIII deficiency"/>
</dbReference>
<dbReference type="PharmGKB" id="PA162"/>
<dbReference type="VEuPathDB" id="HostDB:ENSG00000124491"/>
<dbReference type="eggNOG" id="ENOG502QQ46">
    <property type="taxonomic scope" value="Eukaryota"/>
</dbReference>
<dbReference type="GeneTree" id="ENSGT01050000244939"/>
<dbReference type="HOGENOM" id="CLU_013435_0_2_1"/>
<dbReference type="InParanoid" id="P00488"/>
<dbReference type="OMA" id="FREVPRN"/>
<dbReference type="OrthoDB" id="437511at2759"/>
<dbReference type="PAN-GO" id="P00488">
    <property type="GO annotations" value="3 GO annotations based on evolutionary models"/>
</dbReference>
<dbReference type="PhylomeDB" id="P00488"/>
<dbReference type="TreeFam" id="TF324278"/>
<dbReference type="BioCyc" id="MetaCyc:ENSG00000124491-MONOMER"/>
<dbReference type="BRENDA" id="2.3.2.13">
    <property type="organism ID" value="2681"/>
</dbReference>
<dbReference type="PathwayCommons" id="P00488"/>
<dbReference type="Reactome" id="R-HSA-114608">
    <property type="pathway name" value="Platelet degranulation"/>
</dbReference>
<dbReference type="Reactome" id="R-HSA-140875">
    <property type="pathway name" value="Common Pathway of Fibrin Clot Formation"/>
</dbReference>
<dbReference type="Reactome" id="R-HSA-6785807">
    <property type="pathway name" value="Interleukin-4 and Interleukin-13 signaling"/>
</dbReference>
<dbReference type="SignaLink" id="P00488"/>
<dbReference type="BioGRID-ORCS" id="2162">
    <property type="hits" value="12 hits in 1151 CRISPR screens"/>
</dbReference>
<dbReference type="ChiTaRS" id="F13A1">
    <property type="organism name" value="human"/>
</dbReference>
<dbReference type="EvolutionaryTrace" id="P00488"/>
<dbReference type="GeneWiki" id="Coagulation_factor_XIII,_A1_polypeptide"/>
<dbReference type="GenomeRNAi" id="2162"/>
<dbReference type="Pharos" id="P00488">
    <property type="development level" value="Tchem"/>
</dbReference>
<dbReference type="PRO" id="PR:P00488"/>
<dbReference type="Proteomes" id="UP000005640">
    <property type="component" value="Chromosome 6"/>
</dbReference>
<dbReference type="RNAct" id="P00488">
    <property type="molecule type" value="protein"/>
</dbReference>
<dbReference type="Bgee" id="ENSG00000124491">
    <property type="expression patterns" value="Expressed in monocyte and 184 other cell types or tissues"/>
</dbReference>
<dbReference type="ExpressionAtlas" id="P00488">
    <property type="expression patterns" value="baseline and differential"/>
</dbReference>
<dbReference type="GO" id="GO:0072562">
    <property type="term" value="C:blood microparticle"/>
    <property type="evidence" value="ECO:0007005"/>
    <property type="project" value="UniProtKB"/>
</dbReference>
<dbReference type="GO" id="GO:0062023">
    <property type="term" value="C:collagen-containing extracellular matrix"/>
    <property type="evidence" value="ECO:0007005"/>
    <property type="project" value="BHF-UCL"/>
</dbReference>
<dbReference type="GO" id="GO:0005576">
    <property type="term" value="C:extracellular region"/>
    <property type="evidence" value="ECO:0000304"/>
    <property type="project" value="Reactome"/>
</dbReference>
<dbReference type="GO" id="GO:0005615">
    <property type="term" value="C:extracellular space"/>
    <property type="evidence" value="ECO:0000303"/>
    <property type="project" value="ComplexPortal"/>
</dbReference>
<dbReference type="GO" id="GO:0031093">
    <property type="term" value="C:platelet alpha granule lumen"/>
    <property type="evidence" value="ECO:0000304"/>
    <property type="project" value="Reactome"/>
</dbReference>
<dbReference type="GO" id="GO:1990234">
    <property type="term" value="C:transferase complex"/>
    <property type="evidence" value="ECO:0000303"/>
    <property type="project" value="ComplexPortal"/>
</dbReference>
<dbReference type="GO" id="GO:0046872">
    <property type="term" value="F:metal ion binding"/>
    <property type="evidence" value="ECO:0007669"/>
    <property type="project" value="UniProtKB-KW"/>
</dbReference>
<dbReference type="GO" id="GO:0003810">
    <property type="term" value="F:protein-glutamine gamma-glutamyltransferase activity"/>
    <property type="evidence" value="ECO:0000314"/>
    <property type="project" value="UniProtKB"/>
</dbReference>
<dbReference type="GO" id="GO:0007596">
    <property type="term" value="P:blood coagulation"/>
    <property type="evidence" value="ECO:0000304"/>
    <property type="project" value="ProtInc"/>
</dbReference>
<dbReference type="GO" id="GO:0072378">
    <property type="term" value="P:blood coagulation, fibrin clot formation"/>
    <property type="evidence" value="ECO:0000314"/>
    <property type="project" value="UniProtKB"/>
</dbReference>
<dbReference type="GO" id="GO:0018149">
    <property type="term" value="P:peptide cross-linking"/>
    <property type="evidence" value="ECO:0000314"/>
    <property type="project" value="UniProtKB"/>
</dbReference>
<dbReference type="FunFam" id="2.60.40.10:FF:001301">
    <property type="entry name" value="Coagulation factor XIII A chain"/>
    <property type="match status" value="1"/>
</dbReference>
<dbReference type="FunFam" id="2.60.40.10:FF:000978">
    <property type="entry name" value="coagulation factor XIII A chain"/>
    <property type="match status" value="1"/>
</dbReference>
<dbReference type="FunFam" id="3.90.260.10:FF:000001">
    <property type="entry name" value="Protein-glutamine gamma-glutamyltransferase 2"/>
    <property type="match status" value="1"/>
</dbReference>
<dbReference type="FunFam" id="2.60.40.10:FF:000171">
    <property type="entry name" value="protein-glutamine gamma-glutamyltransferase 6"/>
    <property type="match status" value="1"/>
</dbReference>
<dbReference type="Gene3D" id="2.60.40.10">
    <property type="entry name" value="Immunoglobulins"/>
    <property type="match status" value="3"/>
</dbReference>
<dbReference type="Gene3D" id="3.90.260.10">
    <property type="entry name" value="Transglutaminase-like"/>
    <property type="match status" value="1"/>
</dbReference>
<dbReference type="InterPro" id="IPR013783">
    <property type="entry name" value="Ig-like_fold"/>
</dbReference>
<dbReference type="InterPro" id="IPR014756">
    <property type="entry name" value="Ig_E-set"/>
</dbReference>
<dbReference type="InterPro" id="IPR038765">
    <property type="entry name" value="Papain-like_cys_pep_sf"/>
</dbReference>
<dbReference type="InterPro" id="IPR050779">
    <property type="entry name" value="Transglutaminase"/>
</dbReference>
<dbReference type="InterPro" id="IPR002931">
    <property type="entry name" value="Transglutaminase-like"/>
</dbReference>
<dbReference type="InterPro" id="IPR036985">
    <property type="entry name" value="Transglutaminase-like_sf"/>
</dbReference>
<dbReference type="InterPro" id="IPR023608">
    <property type="entry name" value="Transglutaminase_animal"/>
</dbReference>
<dbReference type="InterPro" id="IPR013808">
    <property type="entry name" value="Transglutaminase_AS"/>
</dbReference>
<dbReference type="InterPro" id="IPR008958">
    <property type="entry name" value="Transglutaminase_C"/>
</dbReference>
<dbReference type="InterPro" id="IPR036238">
    <property type="entry name" value="Transglutaminase_C_sf"/>
</dbReference>
<dbReference type="InterPro" id="IPR001102">
    <property type="entry name" value="Transglutaminase_N"/>
</dbReference>
<dbReference type="PANTHER" id="PTHR11590:SF42">
    <property type="entry name" value="COAGULATION FACTOR XIII A CHAIN"/>
    <property type="match status" value="1"/>
</dbReference>
<dbReference type="PANTHER" id="PTHR11590">
    <property type="entry name" value="PROTEIN-GLUTAMINE GAMMA-GLUTAMYLTRANSFERASE"/>
    <property type="match status" value="1"/>
</dbReference>
<dbReference type="Pfam" id="PF00927">
    <property type="entry name" value="Transglut_C"/>
    <property type="match status" value="2"/>
</dbReference>
<dbReference type="Pfam" id="PF01841">
    <property type="entry name" value="Transglut_core"/>
    <property type="match status" value="1"/>
</dbReference>
<dbReference type="Pfam" id="PF00868">
    <property type="entry name" value="Transglut_N"/>
    <property type="match status" value="1"/>
</dbReference>
<dbReference type="PIRSF" id="PIRSF000459">
    <property type="entry name" value="TGM_EBP42"/>
    <property type="match status" value="1"/>
</dbReference>
<dbReference type="SMART" id="SM00460">
    <property type="entry name" value="TGc"/>
    <property type="match status" value="1"/>
</dbReference>
<dbReference type="SUPFAM" id="SSF54001">
    <property type="entry name" value="Cysteine proteinases"/>
    <property type="match status" value="1"/>
</dbReference>
<dbReference type="SUPFAM" id="SSF81296">
    <property type="entry name" value="E set domains"/>
    <property type="match status" value="1"/>
</dbReference>
<dbReference type="SUPFAM" id="SSF49309">
    <property type="entry name" value="Transglutaminase, two C-terminal domains"/>
    <property type="match status" value="2"/>
</dbReference>
<dbReference type="PROSITE" id="PS00547">
    <property type="entry name" value="TRANSGLUTAMINASES"/>
    <property type="match status" value="1"/>
</dbReference>
<organism>
    <name type="scientific">Homo sapiens</name>
    <name type="common">Human</name>
    <dbReference type="NCBI Taxonomy" id="9606"/>
    <lineage>
        <taxon>Eukaryota</taxon>
        <taxon>Metazoa</taxon>
        <taxon>Chordata</taxon>
        <taxon>Craniata</taxon>
        <taxon>Vertebrata</taxon>
        <taxon>Euteleostomi</taxon>
        <taxon>Mammalia</taxon>
        <taxon>Eutheria</taxon>
        <taxon>Euarchontoglires</taxon>
        <taxon>Primates</taxon>
        <taxon>Haplorrhini</taxon>
        <taxon>Catarrhini</taxon>
        <taxon>Hominidae</taxon>
        <taxon>Homo</taxon>
    </lineage>
</organism>
<keyword id="KW-0002">3D-structure</keyword>
<keyword id="KW-0007">Acetylation</keyword>
<keyword id="KW-0012">Acyltransferase</keyword>
<keyword id="KW-0094">Blood coagulation</keyword>
<keyword id="KW-0106">Calcium</keyword>
<keyword id="KW-0963">Cytoplasm</keyword>
<keyword id="KW-0903">Direct protein sequencing</keyword>
<keyword id="KW-0225">Disease variant</keyword>
<keyword id="KW-0325">Glycoprotein</keyword>
<keyword id="KW-0356">Hemostasis</keyword>
<keyword id="KW-0479">Metal-binding</keyword>
<keyword id="KW-1267">Proteomics identification</keyword>
<keyword id="KW-1185">Reference proteome</keyword>
<keyword id="KW-0964">Secreted</keyword>
<keyword id="KW-0808">Transferase</keyword>
<keyword id="KW-0865">Zymogen</keyword>
<accession>P00488</accession>
<accession>Q59HA7</accession>
<accession>Q8N6X2</accession>
<accession>Q96P24</accession>
<accession>Q9BX29</accession>